<comment type="function">
    <text evidence="1">Essential core component of the TIM22 complex, a complex that mediates the import and insertion of multi-pass transmembrane proteins into the mitochondrial inner membrane. In the TIM22 complex, it constitutes the voltage-activated and signal-gated channel. Forms a twin-pore translocase that uses the membrane potential as external driving force in 2 voltage-dependent steps (By similarity).</text>
</comment>
<comment type="subunit">
    <text evidence="2">Component of the TIM22 complex, whose core is composed of TIMM22, associated with peripheral protein FXC1/TIMM10B and the 70 kDa heterohexamer. In most cases, the 70 kDa complex is composed of TIMM9 and TIMM10 (TIMM10A or TIMM10B). A small fraction of the 70 kDa complex is composed of TIMM8 (TIMM8A/DDP1 or TIMM8B/DDP2) and TIMM13. The TIM22 complex also contains AGK and TIMM29. Interacts directly with TIMM9, TIMM10A and FXC1/TIMM10B. Interacts (when oxidized) with TIMM29; interaction is direct.</text>
</comment>
<comment type="subcellular location">
    <subcellularLocation>
        <location evidence="2">Mitochondrion inner membrane</location>
        <topology evidence="3">Multi-pass membrane protein</topology>
    </subcellularLocation>
</comment>
<comment type="PTM">
    <text evidence="2">Disulfide bonds promote efficient assembly of the TIM22 complex.</text>
</comment>
<comment type="similarity">
    <text evidence="4">Belongs to the Tim17/Tim22/Tim23 family.</text>
</comment>
<comment type="sequence caution" evidence="4">
    <conflict type="erroneous gene model prediction">
        <sequence resource="EMBL-CDS" id="CAI25857"/>
    </conflict>
</comment>
<keyword id="KW-1015">Disulfide bond</keyword>
<keyword id="KW-0472">Membrane</keyword>
<keyword id="KW-0496">Mitochondrion</keyword>
<keyword id="KW-0999">Mitochondrion inner membrane</keyword>
<keyword id="KW-0653">Protein transport</keyword>
<keyword id="KW-1185">Reference proteome</keyword>
<keyword id="KW-0811">Translocation</keyword>
<keyword id="KW-0812">Transmembrane</keyword>
<keyword id="KW-1133">Transmembrane helix</keyword>
<keyword id="KW-0813">Transport</keyword>
<feature type="chain" id="PRO_0000210299" description="Mitochondrial import inner membrane translocase subunit Tim22">
    <location>
        <begin position="1"/>
        <end position="194"/>
    </location>
</feature>
<feature type="transmembrane region" description="Helical" evidence="3">
    <location>
        <begin position="74"/>
        <end position="94"/>
    </location>
</feature>
<feature type="transmembrane region" description="Helical" evidence="3">
    <location>
        <begin position="123"/>
        <end position="143"/>
    </location>
</feature>
<feature type="transmembrane region" description="Helical" evidence="3">
    <location>
        <begin position="170"/>
        <end position="190"/>
    </location>
</feature>
<feature type="disulfide bond" evidence="2">
    <location>
        <begin position="69"/>
        <end position="141"/>
    </location>
</feature>
<feature type="disulfide bond" evidence="2">
    <location>
        <begin position="160"/>
        <end position="179"/>
    </location>
</feature>
<feature type="sequence conflict" description="In Ref. 1; AAF28359." evidence="4" ref="1">
    <original>QP</original>
    <variation>HA</variation>
    <location>
        <begin position="38"/>
        <end position="39"/>
    </location>
</feature>
<organism>
    <name type="scientific">Mus musculus</name>
    <name type="common">Mouse</name>
    <dbReference type="NCBI Taxonomy" id="10090"/>
    <lineage>
        <taxon>Eukaryota</taxon>
        <taxon>Metazoa</taxon>
        <taxon>Chordata</taxon>
        <taxon>Craniata</taxon>
        <taxon>Vertebrata</taxon>
        <taxon>Euteleostomi</taxon>
        <taxon>Mammalia</taxon>
        <taxon>Eutheria</taxon>
        <taxon>Euarchontoglires</taxon>
        <taxon>Glires</taxon>
        <taxon>Rodentia</taxon>
        <taxon>Myomorpha</taxon>
        <taxon>Muroidea</taxon>
        <taxon>Muridae</taxon>
        <taxon>Murinae</taxon>
        <taxon>Mus</taxon>
        <taxon>Mus</taxon>
    </lineage>
</organism>
<proteinExistence type="evidence at protein level"/>
<protein>
    <recommendedName>
        <fullName>Mitochondrial import inner membrane translocase subunit Tim22</fullName>
    </recommendedName>
</protein>
<accession>Q9CQ85</accession>
<accession>Q5SSL1</accession>
<accession>Q5SSL2</accession>
<accession>Q8QZU2</accession>
<accession>Q9JKW2</accession>
<sequence>MAATAPKAGGSAPEAAGSAEAPLQYSLLLQYLVGDKRQPRLLEPGSLGGIPSPAKSEEQKMIERAMESCAFKAVLACVGGFVLGGAFGIFTAGIDTNVGFDPKDPYRTPTAKEVLKDMGQRGMSYAKNFAIVGAMFSCTECLVESYRGKSDWKNSVISGCITGGAIGFRAGVKAGAIGCGGFAAFSAAIDYYLR</sequence>
<reference key="1">
    <citation type="journal article" date="1999" name="FEBS Lett.">
        <title>The mitochondrial TIM22 preprotein translocase is highly conserved throughout the eukaryotic kingdom.</title>
        <authorList>
            <person name="Bauer M.F."/>
            <person name="Rothbauer U."/>
            <person name="Muehlenbein N."/>
            <person name="Smith R.J.H."/>
            <person name="Gerbitz K.-D."/>
            <person name="Neupert W."/>
            <person name="Brunner M."/>
            <person name="Hofmann S."/>
        </authorList>
    </citation>
    <scope>NUCLEOTIDE SEQUENCE [MRNA]</scope>
</reference>
<reference key="2">
    <citation type="journal article" date="2005" name="Science">
        <title>The transcriptional landscape of the mammalian genome.</title>
        <authorList>
            <person name="Carninci P."/>
            <person name="Kasukawa T."/>
            <person name="Katayama S."/>
            <person name="Gough J."/>
            <person name="Frith M.C."/>
            <person name="Maeda N."/>
            <person name="Oyama R."/>
            <person name="Ravasi T."/>
            <person name="Lenhard B."/>
            <person name="Wells C."/>
            <person name="Kodzius R."/>
            <person name="Shimokawa K."/>
            <person name="Bajic V.B."/>
            <person name="Brenner S.E."/>
            <person name="Batalov S."/>
            <person name="Forrest A.R."/>
            <person name="Zavolan M."/>
            <person name="Davis M.J."/>
            <person name="Wilming L.G."/>
            <person name="Aidinis V."/>
            <person name="Allen J.E."/>
            <person name="Ambesi-Impiombato A."/>
            <person name="Apweiler R."/>
            <person name="Aturaliya R.N."/>
            <person name="Bailey T.L."/>
            <person name="Bansal M."/>
            <person name="Baxter L."/>
            <person name="Beisel K.W."/>
            <person name="Bersano T."/>
            <person name="Bono H."/>
            <person name="Chalk A.M."/>
            <person name="Chiu K.P."/>
            <person name="Choudhary V."/>
            <person name="Christoffels A."/>
            <person name="Clutterbuck D.R."/>
            <person name="Crowe M.L."/>
            <person name="Dalla E."/>
            <person name="Dalrymple B.P."/>
            <person name="de Bono B."/>
            <person name="Della Gatta G."/>
            <person name="di Bernardo D."/>
            <person name="Down T."/>
            <person name="Engstrom P."/>
            <person name="Fagiolini M."/>
            <person name="Faulkner G."/>
            <person name="Fletcher C.F."/>
            <person name="Fukushima T."/>
            <person name="Furuno M."/>
            <person name="Futaki S."/>
            <person name="Gariboldi M."/>
            <person name="Georgii-Hemming P."/>
            <person name="Gingeras T.R."/>
            <person name="Gojobori T."/>
            <person name="Green R.E."/>
            <person name="Gustincich S."/>
            <person name="Harbers M."/>
            <person name="Hayashi Y."/>
            <person name="Hensch T.K."/>
            <person name="Hirokawa N."/>
            <person name="Hill D."/>
            <person name="Huminiecki L."/>
            <person name="Iacono M."/>
            <person name="Ikeo K."/>
            <person name="Iwama A."/>
            <person name="Ishikawa T."/>
            <person name="Jakt M."/>
            <person name="Kanapin A."/>
            <person name="Katoh M."/>
            <person name="Kawasawa Y."/>
            <person name="Kelso J."/>
            <person name="Kitamura H."/>
            <person name="Kitano H."/>
            <person name="Kollias G."/>
            <person name="Krishnan S.P."/>
            <person name="Kruger A."/>
            <person name="Kummerfeld S.K."/>
            <person name="Kurochkin I.V."/>
            <person name="Lareau L.F."/>
            <person name="Lazarevic D."/>
            <person name="Lipovich L."/>
            <person name="Liu J."/>
            <person name="Liuni S."/>
            <person name="McWilliam S."/>
            <person name="Madan Babu M."/>
            <person name="Madera M."/>
            <person name="Marchionni L."/>
            <person name="Matsuda H."/>
            <person name="Matsuzawa S."/>
            <person name="Miki H."/>
            <person name="Mignone F."/>
            <person name="Miyake S."/>
            <person name="Morris K."/>
            <person name="Mottagui-Tabar S."/>
            <person name="Mulder N."/>
            <person name="Nakano N."/>
            <person name="Nakauchi H."/>
            <person name="Ng P."/>
            <person name="Nilsson R."/>
            <person name="Nishiguchi S."/>
            <person name="Nishikawa S."/>
            <person name="Nori F."/>
            <person name="Ohara O."/>
            <person name="Okazaki Y."/>
            <person name="Orlando V."/>
            <person name="Pang K.C."/>
            <person name="Pavan W.J."/>
            <person name="Pavesi G."/>
            <person name="Pesole G."/>
            <person name="Petrovsky N."/>
            <person name="Piazza S."/>
            <person name="Reed J."/>
            <person name="Reid J.F."/>
            <person name="Ring B.Z."/>
            <person name="Ringwald M."/>
            <person name="Rost B."/>
            <person name="Ruan Y."/>
            <person name="Salzberg S.L."/>
            <person name="Sandelin A."/>
            <person name="Schneider C."/>
            <person name="Schoenbach C."/>
            <person name="Sekiguchi K."/>
            <person name="Semple C.A."/>
            <person name="Seno S."/>
            <person name="Sessa L."/>
            <person name="Sheng Y."/>
            <person name="Shibata Y."/>
            <person name="Shimada H."/>
            <person name="Shimada K."/>
            <person name="Silva D."/>
            <person name="Sinclair B."/>
            <person name="Sperling S."/>
            <person name="Stupka E."/>
            <person name="Sugiura K."/>
            <person name="Sultana R."/>
            <person name="Takenaka Y."/>
            <person name="Taki K."/>
            <person name="Tammoja K."/>
            <person name="Tan S.L."/>
            <person name="Tang S."/>
            <person name="Taylor M.S."/>
            <person name="Tegner J."/>
            <person name="Teichmann S.A."/>
            <person name="Ueda H.R."/>
            <person name="van Nimwegen E."/>
            <person name="Verardo R."/>
            <person name="Wei C.L."/>
            <person name="Yagi K."/>
            <person name="Yamanishi H."/>
            <person name="Zabarovsky E."/>
            <person name="Zhu S."/>
            <person name="Zimmer A."/>
            <person name="Hide W."/>
            <person name="Bult C."/>
            <person name="Grimmond S.M."/>
            <person name="Teasdale R.D."/>
            <person name="Liu E.T."/>
            <person name="Brusic V."/>
            <person name="Quackenbush J."/>
            <person name="Wahlestedt C."/>
            <person name="Mattick J.S."/>
            <person name="Hume D.A."/>
            <person name="Kai C."/>
            <person name="Sasaki D."/>
            <person name="Tomaru Y."/>
            <person name="Fukuda S."/>
            <person name="Kanamori-Katayama M."/>
            <person name="Suzuki M."/>
            <person name="Aoki J."/>
            <person name="Arakawa T."/>
            <person name="Iida J."/>
            <person name="Imamura K."/>
            <person name="Itoh M."/>
            <person name="Kato T."/>
            <person name="Kawaji H."/>
            <person name="Kawagashira N."/>
            <person name="Kawashima T."/>
            <person name="Kojima M."/>
            <person name="Kondo S."/>
            <person name="Konno H."/>
            <person name="Nakano K."/>
            <person name="Ninomiya N."/>
            <person name="Nishio T."/>
            <person name="Okada M."/>
            <person name="Plessy C."/>
            <person name="Shibata K."/>
            <person name="Shiraki T."/>
            <person name="Suzuki S."/>
            <person name="Tagami M."/>
            <person name="Waki K."/>
            <person name="Watahiki A."/>
            <person name="Okamura-Oho Y."/>
            <person name="Suzuki H."/>
            <person name="Kawai J."/>
            <person name="Hayashizaki Y."/>
        </authorList>
    </citation>
    <scope>NUCLEOTIDE SEQUENCE [LARGE SCALE MRNA]</scope>
    <source>
        <strain>C57BL/6J</strain>
        <tissue>Embryo</tissue>
    </source>
</reference>
<reference key="3">
    <citation type="journal article" date="2009" name="PLoS Biol.">
        <title>Lineage-specific biology revealed by a finished genome assembly of the mouse.</title>
        <authorList>
            <person name="Church D.M."/>
            <person name="Goodstadt L."/>
            <person name="Hillier L.W."/>
            <person name="Zody M.C."/>
            <person name="Goldstein S."/>
            <person name="She X."/>
            <person name="Bult C.J."/>
            <person name="Agarwala R."/>
            <person name="Cherry J.L."/>
            <person name="DiCuccio M."/>
            <person name="Hlavina W."/>
            <person name="Kapustin Y."/>
            <person name="Meric P."/>
            <person name="Maglott D."/>
            <person name="Birtle Z."/>
            <person name="Marques A.C."/>
            <person name="Graves T."/>
            <person name="Zhou S."/>
            <person name="Teague B."/>
            <person name="Potamousis K."/>
            <person name="Churas C."/>
            <person name="Place M."/>
            <person name="Herschleb J."/>
            <person name="Runnheim R."/>
            <person name="Forrest D."/>
            <person name="Amos-Landgraf J."/>
            <person name="Schwartz D.C."/>
            <person name="Cheng Z."/>
            <person name="Lindblad-Toh K."/>
            <person name="Eichler E.E."/>
            <person name="Ponting C.P."/>
        </authorList>
    </citation>
    <scope>NUCLEOTIDE SEQUENCE [LARGE SCALE GENOMIC DNA]</scope>
    <source>
        <strain>C57BL/6J</strain>
    </source>
</reference>
<reference key="4">
    <citation type="journal article" date="2004" name="Genome Res.">
        <title>The status, quality, and expansion of the NIH full-length cDNA project: the Mammalian Gene Collection (MGC).</title>
        <authorList>
            <consortium name="The MGC Project Team"/>
        </authorList>
    </citation>
    <scope>NUCLEOTIDE SEQUENCE [LARGE SCALE MRNA]</scope>
    <source>
        <strain>C57BL/6J</strain>
        <tissue>Brain</tissue>
        <tissue>Salivary gland</tissue>
    </source>
</reference>
<reference key="5">
    <citation type="journal article" date="2010" name="Cell">
        <title>A tissue-specific atlas of mouse protein phosphorylation and expression.</title>
        <authorList>
            <person name="Huttlin E.L."/>
            <person name="Jedrychowski M.P."/>
            <person name="Elias J.E."/>
            <person name="Goswami T."/>
            <person name="Rad R."/>
            <person name="Beausoleil S.A."/>
            <person name="Villen J."/>
            <person name="Haas W."/>
            <person name="Sowa M.E."/>
            <person name="Gygi S.P."/>
        </authorList>
    </citation>
    <scope>IDENTIFICATION BY MASS SPECTROMETRY [LARGE SCALE ANALYSIS]</scope>
    <source>
        <tissue>Brain</tissue>
        <tissue>Brown adipose tissue</tissue>
        <tissue>Heart</tissue>
        <tissue>Kidney</tissue>
        <tissue>Liver</tissue>
        <tissue>Pancreas</tissue>
        <tissue>Spleen</tissue>
        <tissue>Testis</tissue>
    </source>
</reference>
<name>TIM22_MOUSE</name>
<gene>
    <name type="primary">Timm22</name>
    <name type="synonym">Tim22</name>
</gene>
<evidence type="ECO:0000250" key="1">
    <source>
        <dbReference type="UniProtKB" id="Q12328"/>
    </source>
</evidence>
<evidence type="ECO:0000250" key="2">
    <source>
        <dbReference type="UniProtKB" id="Q9Y584"/>
    </source>
</evidence>
<evidence type="ECO:0000255" key="3"/>
<evidence type="ECO:0000305" key="4"/>
<dbReference type="EMBL" id="AF223950">
    <property type="protein sequence ID" value="AAF28359.1"/>
    <property type="molecule type" value="mRNA"/>
</dbReference>
<dbReference type="EMBL" id="AK012130">
    <property type="protein sequence ID" value="BAB28051.1"/>
    <property type="molecule type" value="mRNA"/>
</dbReference>
<dbReference type="EMBL" id="AK017389">
    <property type="protein sequence ID" value="BAB30726.1"/>
    <property type="molecule type" value="mRNA"/>
</dbReference>
<dbReference type="EMBL" id="AL663050">
    <property type="protein sequence ID" value="CAI25857.1"/>
    <property type="status" value="ALT_SEQ"/>
    <property type="molecule type" value="Genomic_DNA"/>
</dbReference>
<dbReference type="EMBL" id="AL663050">
    <property type="protein sequence ID" value="CAI25858.1"/>
    <property type="molecule type" value="Genomic_DNA"/>
</dbReference>
<dbReference type="EMBL" id="BC022610">
    <property type="protein sequence ID" value="AAH22610.1"/>
    <property type="molecule type" value="mRNA"/>
</dbReference>
<dbReference type="EMBL" id="BC055279">
    <property type="protein sequence ID" value="AAH55279.1"/>
    <property type="molecule type" value="mRNA"/>
</dbReference>
<dbReference type="CCDS" id="CCDS25065.1"/>
<dbReference type="RefSeq" id="NP_001278090.1">
    <property type="nucleotide sequence ID" value="NM_001291161.1"/>
</dbReference>
<dbReference type="RefSeq" id="NP_062792.2">
    <property type="nucleotide sequence ID" value="NM_019818.5"/>
</dbReference>
<dbReference type="RefSeq" id="NP_075844.1">
    <property type="nucleotide sequence ID" value="NM_023355.2"/>
</dbReference>
<dbReference type="SMR" id="Q9CQ85"/>
<dbReference type="FunCoup" id="Q9CQ85">
    <property type="interactions" value="3156"/>
</dbReference>
<dbReference type="IntAct" id="Q9CQ85">
    <property type="interactions" value="1"/>
</dbReference>
<dbReference type="MINT" id="Q9CQ85"/>
<dbReference type="STRING" id="10090.ENSMUSP00000021203"/>
<dbReference type="PhosphoSitePlus" id="Q9CQ85"/>
<dbReference type="SwissPalm" id="Q9CQ85"/>
<dbReference type="jPOST" id="Q9CQ85"/>
<dbReference type="PaxDb" id="10090-ENSMUSP00000021203"/>
<dbReference type="ProteomicsDB" id="262785"/>
<dbReference type="Pumba" id="Q9CQ85"/>
<dbReference type="Antibodypedia" id="22666">
    <property type="antibodies" value="28 antibodies from 17 providers"/>
</dbReference>
<dbReference type="DNASU" id="56322"/>
<dbReference type="Ensembl" id="ENSMUST00000021203.7">
    <property type="protein sequence ID" value="ENSMUSP00000021203.7"/>
    <property type="gene ID" value="ENSMUSG00000020843.16"/>
</dbReference>
<dbReference type="GeneID" id="56322"/>
<dbReference type="KEGG" id="mmu:56322"/>
<dbReference type="UCSC" id="uc007kfq.3">
    <property type="organism name" value="mouse"/>
</dbReference>
<dbReference type="AGR" id="MGI:1929742"/>
<dbReference type="CTD" id="29928"/>
<dbReference type="MGI" id="MGI:1929742">
    <property type="gene designation" value="Timm22"/>
</dbReference>
<dbReference type="VEuPathDB" id="HostDB:ENSMUSG00000020843"/>
<dbReference type="eggNOG" id="KOG3225">
    <property type="taxonomic scope" value="Eukaryota"/>
</dbReference>
<dbReference type="GeneTree" id="ENSGT00390000016067"/>
<dbReference type="HOGENOM" id="CLU_091077_0_0_1"/>
<dbReference type="InParanoid" id="Q9CQ85"/>
<dbReference type="OMA" id="VNPNMAD"/>
<dbReference type="OrthoDB" id="75343at2759"/>
<dbReference type="PhylomeDB" id="Q9CQ85"/>
<dbReference type="TreeFam" id="TF105836"/>
<dbReference type="BioGRID-ORCS" id="56322">
    <property type="hits" value="26 hits in 76 CRISPR screens"/>
</dbReference>
<dbReference type="ChiTaRS" id="Timm22">
    <property type="organism name" value="mouse"/>
</dbReference>
<dbReference type="PRO" id="PR:Q9CQ85"/>
<dbReference type="Proteomes" id="UP000000589">
    <property type="component" value="Chromosome 11"/>
</dbReference>
<dbReference type="RNAct" id="Q9CQ85">
    <property type="molecule type" value="protein"/>
</dbReference>
<dbReference type="Bgee" id="ENSMUSG00000020843">
    <property type="expression patterns" value="Expressed in morula and 261 other cell types or tissues"/>
</dbReference>
<dbReference type="ExpressionAtlas" id="Q9CQ85">
    <property type="expression patterns" value="baseline and differential"/>
</dbReference>
<dbReference type="GO" id="GO:0005739">
    <property type="term" value="C:mitochondrion"/>
    <property type="evidence" value="ECO:0007005"/>
    <property type="project" value="MGI"/>
</dbReference>
<dbReference type="GO" id="GO:0042721">
    <property type="term" value="C:TIM22 mitochondrial import inner membrane insertion complex"/>
    <property type="evidence" value="ECO:0000250"/>
    <property type="project" value="UniProtKB"/>
</dbReference>
<dbReference type="GO" id="GO:0140318">
    <property type="term" value="F:protein transporter activity"/>
    <property type="evidence" value="ECO:0007669"/>
    <property type="project" value="Ensembl"/>
</dbReference>
<dbReference type="GO" id="GO:0045039">
    <property type="term" value="P:protein insertion into mitochondrial inner membrane"/>
    <property type="evidence" value="ECO:0000250"/>
    <property type="project" value="UniProtKB"/>
</dbReference>
<dbReference type="InterPro" id="IPR039175">
    <property type="entry name" value="TIM22"/>
</dbReference>
<dbReference type="PANTHER" id="PTHR14110">
    <property type="entry name" value="MITOCHONDRIAL IMPORT INNER MEMBRANE TRANSLOCASE SUBUNIT TIM22"/>
    <property type="match status" value="1"/>
</dbReference>
<dbReference type="PANTHER" id="PTHR14110:SF0">
    <property type="entry name" value="MITOCHONDRIAL IMPORT INNER MEMBRANE TRANSLOCASE SUBUNIT TIM22"/>
    <property type="match status" value="1"/>
</dbReference>
<dbReference type="Pfam" id="PF02466">
    <property type="entry name" value="Tim17"/>
    <property type="match status" value="1"/>
</dbReference>